<evidence type="ECO:0000255" key="1">
    <source>
        <dbReference type="HAMAP-Rule" id="MF_00011"/>
    </source>
</evidence>
<organism>
    <name type="scientific">Geotalea daltonii (strain DSM 22248 / JCM 15807 / FRC-32)</name>
    <name type="common">Geobacter daltonii</name>
    <dbReference type="NCBI Taxonomy" id="316067"/>
    <lineage>
        <taxon>Bacteria</taxon>
        <taxon>Pseudomonadati</taxon>
        <taxon>Thermodesulfobacteriota</taxon>
        <taxon>Desulfuromonadia</taxon>
        <taxon>Geobacterales</taxon>
        <taxon>Geobacteraceae</taxon>
        <taxon>Geotalea</taxon>
    </lineage>
</organism>
<accession>B9M1R2</accession>
<sequence>MANVVVVGAQWGDEGKGKVVDIYTEFADDVVRYQGGNNAGHTLVVGDEKIVLHLIPSGILHKGKRCIIGNGVVLDPEVFIREITNLKAKGKFQDDGVLLLSESLHIIMPYHKRIDIAREAKSGAKKIGTTGRGIGPAYEDKIGRRGIRLMDLLDKQVFTRKLKESLEEKNFLLEKMLGEKPFSFEEIFDEYSAFADTLRTYVADTTLVLHQDLKAGKKLLFEGAQGTLLDVDHGTYPYVTSSSTCAGGACTGTGASPRDINEIIGISKAYVTRVGSGPFPTELEDADGEKLRQTGGEFGATTGRPRRCGWFDALVIKYAVRVNGLTGIALTKLDVLSDFETIKICTGYSYNGKFLSELPANLDIFEKCQPVYEEMPGWQTDITAARSFDDLPEKARTYVKRLEELAGCPIVLVSVGPRRDQTIMLKNPFEA</sequence>
<dbReference type="EC" id="6.3.4.4" evidence="1"/>
<dbReference type="EMBL" id="CP001390">
    <property type="protein sequence ID" value="ACM19208.1"/>
    <property type="molecule type" value="Genomic_DNA"/>
</dbReference>
<dbReference type="RefSeq" id="WP_012645937.1">
    <property type="nucleotide sequence ID" value="NC_011979.1"/>
</dbReference>
<dbReference type="SMR" id="B9M1R2"/>
<dbReference type="STRING" id="316067.Geob_0846"/>
<dbReference type="KEGG" id="geo:Geob_0846"/>
<dbReference type="eggNOG" id="COG0104">
    <property type="taxonomic scope" value="Bacteria"/>
</dbReference>
<dbReference type="HOGENOM" id="CLU_029848_0_0_7"/>
<dbReference type="OrthoDB" id="9807553at2"/>
<dbReference type="UniPathway" id="UPA00075">
    <property type="reaction ID" value="UER00335"/>
</dbReference>
<dbReference type="Proteomes" id="UP000007721">
    <property type="component" value="Chromosome"/>
</dbReference>
<dbReference type="GO" id="GO:0005737">
    <property type="term" value="C:cytoplasm"/>
    <property type="evidence" value="ECO:0007669"/>
    <property type="project" value="UniProtKB-SubCell"/>
</dbReference>
<dbReference type="GO" id="GO:0004019">
    <property type="term" value="F:adenylosuccinate synthase activity"/>
    <property type="evidence" value="ECO:0007669"/>
    <property type="project" value="UniProtKB-UniRule"/>
</dbReference>
<dbReference type="GO" id="GO:0005525">
    <property type="term" value="F:GTP binding"/>
    <property type="evidence" value="ECO:0007669"/>
    <property type="project" value="UniProtKB-UniRule"/>
</dbReference>
<dbReference type="GO" id="GO:0000287">
    <property type="term" value="F:magnesium ion binding"/>
    <property type="evidence" value="ECO:0007669"/>
    <property type="project" value="UniProtKB-UniRule"/>
</dbReference>
<dbReference type="GO" id="GO:0044208">
    <property type="term" value="P:'de novo' AMP biosynthetic process"/>
    <property type="evidence" value="ECO:0007669"/>
    <property type="project" value="UniProtKB-UniRule"/>
</dbReference>
<dbReference type="GO" id="GO:0046040">
    <property type="term" value="P:IMP metabolic process"/>
    <property type="evidence" value="ECO:0007669"/>
    <property type="project" value="TreeGrafter"/>
</dbReference>
<dbReference type="CDD" id="cd03108">
    <property type="entry name" value="AdSS"/>
    <property type="match status" value="1"/>
</dbReference>
<dbReference type="FunFam" id="1.10.300.10:FF:000001">
    <property type="entry name" value="Adenylosuccinate synthetase"/>
    <property type="match status" value="1"/>
</dbReference>
<dbReference type="FunFam" id="3.90.170.10:FF:000001">
    <property type="entry name" value="Adenylosuccinate synthetase"/>
    <property type="match status" value="1"/>
</dbReference>
<dbReference type="Gene3D" id="3.40.440.10">
    <property type="entry name" value="Adenylosuccinate Synthetase, subunit A, domain 1"/>
    <property type="match status" value="1"/>
</dbReference>
<dbReference type="Gene3D" id="1.10.300.10">
    <property type="entry name" value="Adenylosuccinate Synthetase, subunit A, domain 2"/>
    <property type="match status" value="1"/>
</dbReference>
<dbReference type="Gene3D" id="3.90.170.10">
    <property type="entry name" value="Adenylosuccinate Synthetase, subunit A, domain 3"/>
    <property type="match status" value="1"/>
</dbReference>
<dbReference type="HAMAP" id="MF_00011">
    <property type="entry name" value="Adenylosucc_synth"/>
    <property type="match status" value="1"/>
</dbReference>
<dbReference type="InterPro" id="IPR018220">
    <property type="entry name" value="Adenylosuccin_syn_GTP-bd"/>
</dbReference>
<dbReference type="InterPro" id="IPR033128">
    <property type="entry name" value="Adenylosuccin_syn_Lys_AS"/>
</dbReference>
<dbReference type="InterPro" id="IPR042109">
    <property type="entry name" value="Adenylosuccinate_synth_dom1"/>
</dbReference>
<dbReference type="InterPro" id="IPR042110">
    <property type="entry name" value="Adenylosuccinate_synth_dom2"/>
</dbReference>
<dbReference type="InterPro" id="IPR042111">
    <property type="entry name" value="Adenylosuccinate_synth_dom3"/>
</dbReference>
<dbReference type="InterPro" id="IPR001114">
    <property type="entry name" value="Adenylosuccinate_synthetase"/>
</dbReference>
<dbReference type="InterPro" id="IPR027417">
    <property type="entry name" value="P-loop_NTPase"/>
</dbReference>
<dbReference type="NCBIfam" id="NF002223">
    <property type="entry name" value="PRK01117.1"/>
    <property type="match status" value="1"/>
</dbReference>
<dbReference type="NCBIfam" id="TIGR00184">
    <property type="entry name" value="purA"/>
    <property type="match status" value="1"/>
</dbReference>
<dbReference type="PANTHER" id="PTHR11846">
    <property type="entry name" value="ADENYLOSUCCINATE SYNTHETASE"/>
    <property type="match status" value="1"/>
</dbReference>
<dbReference type="PANTHER" id="PTHR11846:SF0">
    <property type="entry name" value="ADENYLOSUCCINATE SYNTHETASE"/>
    <property type="match status" value="1"/>
</dbReference>
<dbReference type="Pfam" id="PF00709">
    <property type="entry name" value="Adenylsucc_synt"/>
    <property type="match status" value="1"/>
</dbReference>
<dbReference type="SMART" id="SM00788">
    <property type="entry name" value="Adenylsucc_synt"/>
    <property type="match status" value="1"/>
</dbReference>
<dbReference type="SUPFAM" id="SSF52540">
    <property type="entry name" value="P-loop containing nucleoside triphosphate hydrolases"/>
    <property type="match status" value="1"/>
</dbReference>
<dbReference type="PROSITE" id="PS01266">
    <property type="entry name" value="ADENYLOSUCCIN_SYN_1"/>
    <property type="match status" value="1"/>
</dbReference>
<dbReference type="PROSITE" id="PS00513">
    <property type="entry name" value="ADENYLOSUCCIN_SYN_2"/>
    <property type="match status" value="1"/>
</dbReference>
<name>PURA_GEODF</name>
<proteinExistence type="inferred from homology"/>
<reference key="1">
    <citation type="submission" date="2009-01" db="EMBL/GenBank/DDBJ databases">
        <title>Complete sequence of Geobacter sp. FRC-32.</title>
        <authorList>
            <consortium name="US DOE Joint Genome Institute"/>
            <person name="Lucas S."/>
            <person name="Copeland A."/>
            <person name="Lapidus A."/>
            <person name="Glavina del Rio T."/>
            <person name="Dalin E."/>
            <person name="Tice H."/>
            <person name="Bruce D."/>
            <person name="Goodwin L."/>
            <person name="Pitluck S."/>
            <person name="Saunders E."/>
            <person name="Brettin T."/>
            <person name="Detter J.C."/>
            <person name="Han C."/>
            <person name="Larimer F."/>
            <person name="Land M."/>
            <person name="Hauser L."/>
            <person name="Kyrpides N."/>
            <person name="Ovchinnikova G."/>
            <person name="Kostka J."/>
            <person name="Richardson P."/>
        </authorList>
    </citation>
    <scope>NUCLEOTIDE SEQUENCE [LARGE SCALE GENOMIC DNA]</scope>
    <source>
        <strain>DSM 22248 / JCM 15807 / FRC-32</strain>
    </source>
</reference>
<protein>
    <recommendedName>
        <fullName evidence="1">Adenylosuccinate synthetase</fullName>
        <shortName evidence="1">AMPSase</shortName>
        <shortName evidence="1">AdSS</shortName>
        <ecNumber evidence="1">6.3.4.4</ecNumber>
    </recommendedName>
    <alternativeName>
        <fullName evidence="1">IMP--aspartate ligase</fullName>
    </alternativeName>
</protein>
<keyword id="KW-0963">Cytoplasm</keyword>
<keyword id="KW-0342">GTP-binding</keyword>
<keyword id="KW-0436">Ligase</keyword>
<keyword id="KW-0460">Magnesium</keyword>
<keyword id="KW-0479">Metal-binding</keyword>
<keyword id="KW-0547">Nucleotide-binding</keyword>
<keyword id="KW-0658">Purine biosynthesis</keyword>
<keyword id="KW-1185">Reference proteome</keyword>
<comment type="function">
    <text evidence="1">Plays an important role in the de novo pathway of purine nucleotide biosynthesis. Catalyzes the first committed step in the biosynthesis of AMP from IMP.</text>
</comment>
<comment type="catalytic activity">
    <reaction evidence="1">
        <text>IMP + L-aspartate + GTP = N(6)-(1,2-dicarboxyethyl)-AMP + GDP + phosphate + 2 H(+)</text>
        <dbReference type="Rhea" id="RHEA:15753"/>
        <dbReference type="ChEBI" id="CHEBI:15378"/>
        <dbReference type="ChEBI" id="CHEBI:29991"/>
        <dbReference type="ChEBI" id="CHEBI:37565"/>
        <dbReference type="ChEBI" id="CHEBI:43474"/>
        <dbReference type="ChEBI" id="CHEBI:57567"/>
        <dbReference type="ChEBI" id="CHEBI:58053"/>
        <dbReference type="ChEBI" id="CHEBI:58189"/>
        <dbReference type="EC" id="6.3.4.4"/>
    </reaction>
</comment>
<comment type="cofactor">
    <cofactor evidence="1">
        <name>Mg(2+)</name>
        <dbReference type="ChEBI" id="CHEBI:18420"/>
    </cofactor>
    <text evidence="1">Binds 1 Mg(2+) ion per subunit.</text>
</comment>
<comment type="pathway">
    <text evidence="1">Purine metabolism; AMP biosynthesis via de novo pathway; AMP from IMP: step 1/2.</text>
</comment>
<comment type="subunit">
    <text evidence="1">Homodimer.</text>
</comment>
<comment type="subcellular location">
    <subcellularLocation>
        <location evidence="1">Cytoplasm</location>
    </subcellularLocation>
</comment>
<comment type="similarity">
    <text evidence="1">Belongs to the adenylosuccinate synthetase family.</text>
</comment>
<gene>
    <name evidence="1" type="primary">purA</name>
    <name type="ordered locus">Geob_0846</name>
</gene>
<feature type="chain" id="PRO_1000194760" description="Adenylosuccinate synthetase">
    <location>
        <begin position="1"/>
        <end position="431"/>
    </location>
</feature>
<feature type="active site" description="Proton acceptor" evidence="1">
    <location>
        <position position="13"/>
    </location>
</feature>
<feature type="active site" description="Proton donor" evidence="1">
    <location>
        <position position="41"/>
    </location>
</feature>
<feature type="binding site" evidence="1">
    <location>
        <begin position="12"/>
        <end position="18"/>
    </location>
    <ligand>
        <name>GTP</name>
        <dbReference type="ChEBI" id="CHEBI:37565"/>
    </ligand>
</feature>
<feature type="binding site" description="in other chain" evidence="1">
    <location>
        <begin position="13"/>
        <end position="16"/>
    </location>
    <ligand>
        <name>IMP</name>
        <dbReference type="ChEBI" id="CHEBI:58053"/>
        <note>ligand shared between dimeric partners</note>
    </ligand>
</feature>
<feature type="binding site" evidence="1">
    <location>
        <position position="13"/>
    </location>
    <ligand>
        <name>Mg(2+)</name>
        <dbReference type="ChEBI" id="CHEBI:18420"/>
    </ligand>
</feature>
<feature type="binding site" description="in other chain" evidence="1">
    <location>
        <begin position="38"/>
        <end position="41"/>
    </location>
    <ligand>
        <name>IMP</name>
        <dbReference type="ChEBI" id="CHEBI:58053"/>
        <note>ligand shared between dimeric partners</note>
    </ligand>
</feature>
<feature type="binding site" evidence="1">
    <location>
        <begin position="40"/>
        <end position="42"/>
    </location>
    <ligand>
        <name>GTP</name>
        <dbReference type="ChEBI" id="CHEBI:37565"/>
    </ligand>
</feature>
<feature type="binding site" evidence="1">
    <location>
        <position position="40"/>
    </location>
    <ligand>
        <name>Mg(2+)</name>
        <dbReference type="ChEBI" id="CHEBI:18420"/>
    </ligand>
</feature>
<feature type="binding site" description="in other chain" evidence="1">
    <location>
        <position position="130"/>
    </location>
    <ligand>
        <name>IMP</name>
        <dbReference type="ChEBI" id="CHEBI:58053"/>
        <note>ligand shared between dimeric partners</note>
    </ligand>
</feature>
<feature type="binding site" evidence="1">
    <location>
        <position position="144"/>
    </location>
    <ligand>
        <name>IMP</name>
        <dbReference type="ChEBI" id="CHEBI:58053"/>
        <note>ligand shared between dimeric partners</note>
    </ligand>
</feature>
<feature type="binding site" description="in other chain" evidence="1">
    <location>
        <position position="225"/>
    </location>
    <ligand>
        <name>IMP</name>
        <dbReference type="ChEBI" id="CHEBI:58053"/>
        <note>ligand shared between dimeric partners</note>
    </ligand>
</feature>
<feature type="binding site" description="in other chain" evidence="1">
    <location>
        <position position="240"/>
    </location>
    <ligand>
        <name>IMP</name>
        <dbReference type="ChEBI" id="CHEBI:58053"/>
        <note>ligand shared between dimeric partners</note>
    </ligand>
</feature>
<feature type="binding site" evidence="1">
    <location>
        <begin position="300"/>
        <end position="306"/>
    </location>
    <ligand>
        <name>substrate</name>
    </ligand>
</feature>
<feature type="binding site" description="in other chain" evidence="1">
    <location>
        <position position="304"/>
    </location>
    <ligand>
        <name>IMP</name>
        <dbReference type="ChEBI" id="CHEBI:58053"/>
        <note>ligand shared between dimeric partners</note>
    </ligand>
</feature>
<feature type="binding site" evidence="1">
    <location>
        <position position="306"/>
    </location>
    <ligand>
        <name>GTP</name>
        <dbReference type="ChEBI" id="CHEBI:37565"/>
    </ligand>
</feature>
<feature type="binding site" evidence="1">
    <location>
        <begin position="332"/>
        <end position="334"/>
    </location>
    <ligand>
        <name>GTP</name>
        <dbReference type="ChEBI" id="CHEBI:37565"/>
    </ligand>
</feature>
<feature type="binding site" evidence="1">
    <location>
        <begin position="414"/>
        <end position="416"/>
    </location>
    <ligand>
        <name>GTP</name>
        <dbReference type="ChEBI" id="CHEBI:37565"/>
    </ligand>
</feature>